<evidence type="ECO:0000250" key="1"/>
<evidence type="ECO:0000305" key="2"/>
<sequence>MSLVANLKLSIGSKNNEFVLRDVQLWETSDTSILDAGQLKRVQSYKGRFVAYVDIKKLPLWIKNQQSRELQCFTRSSTTLRYFSTKLGVKQRGIVFECIPLTEKADNQGCCSYYIFYRNENVVKVVQVDLSIKANIDLQIKQIKSTLSNPQQADVKKLDSTVSATIDSRLNSDITKIVSENIERHEHRTSKVLKSMLSNDKKIQVRDTLSKLILAGLRLRGLSSTKSETQKLFRITLSASEFAHRKDLIQLQRGHTKAIPFEEMQETVETLLNLFTRNG</sequence>
<organism>
    <name type="scientific">Candida glabrata (strain ATCC 2001 / BCRC 20586 / JCM 3761 / NBRC 0622 / NRRL Y-65 / CBS 138)</name>
    <name type="common">Yeast</name>
    <name type="synonym">Nakaseomyces glabratus</name>
    <dbReference type="NCBI Taxonomy" id="284593"/>
    <lineage>
        <taxon>Eukaryota</taxon>
        <taxon>Fungi</taxon>
        <taxon>Dikarya</taxon>
        <taxon>Ascomycota</taxon>
        <taxon>Saccharomycotina</taxon>
        <taxon>Saccharomycetes</taxon>
        <taxon>Saccharomycetales</taxon>
        <taxon>Saccharomycetaceae</taxon>
        <taxon>Nakaseomyces</taxon>
    </lineage>
</organism>
<proteinExistence type="inferred from homology"/>
<accession>Q6FKM8</accession>
<name>SLD7_CANGA</name>
<protein>
    <recommendedName>
        <fullName>Mitochondrial morphogenesis protein SLD7</fullName>
    </recommendedName>
</protein>
<comment type="function">
    <text evidence="1">Required for the proper initiation of DNA replication. Required for mitochondrial morphology (By similarity).</text>
</comment>
<comment type="subcellular location">
    <subcellularLocation>
        <location evidence="1">Nucleus</location>
    </subcellularLocation>
    <subcellularLocation>
        <location evidence="1">Cytoplasm</location>
        <location evidence="1">Cytoskeleton</location>
        <location evidence="1">Spindle pole</location>
    </subcellularLocation>
</comment>
<comment type="similarity">
    <text evidence="2">Belongs to the SLD7 family.</text>
</comment>
<dbReference type="EMBL" id="CR380958">
    <property type="protein sequence ID" value="CAG62190.1"/>
    <property type="molecule type" value="Genomic_DNA"/>
</dbReference>
<dbReference type="RefSeq" id="XP_449216.1">
    <property type="nucleotide sequence ID" value="XM_449216.1"/>
</dbReference>
<dbReference type="SMR" id="Q6FKM8"/>
<dbReference type="FunCoup" id="Q6FKM8">
    <property type="interactions" value="16"/>
</dbReference>
<dbReference type="STRING" id="284593.Q6FKM8"/>
<dbReference type="EnsemblFungi" id="CAGL0L10340g-T">
    <property type="protein sequence ID" value="CAGL0L10340g-T-p1"/>
    <property type="gene ID" value="CAGL0L10340g"/>
</dbReference>
<dbReference type="KEGG" id="cgr:2891067"/>
<dbReference type="CGD" id="CAL0135148">
    <property type="gene designation" value="CAGL0L10340g"/>
</dbReference>
<dbReference type="VEuPathDB" id="FungiDB:CAGL0L10340g"/>
<dbReference type="eggNOG" id="ENOG502RZIJ">
    <property type="taxonomic scope" value="Eukaryota"/>
</dbReference>
<dbReference type="HOGENOM" id="CLU_072105_0_0_1"/>
<dbReference type="InParanoid" id="Q6FKM8"/>
<dbReference type="OMA" id="EFTHRDE"/>
<dbReference type="Proteomes" id="UP000002428">
    <property type="component" value="Chromosome L"/>
</dbReference>
<dbReference type="GO" id="GO:0000775">
    <property type="term" value="C:chromosome, centromeric region"/>
    <property type="evidence" value="ECO:0007669"/>
    <property type="project" value="EnsemblFungi"/>
</dbReference>
<dbReference type="GO" id="GO:0005737">
    <property type="term" value="C:cytoplasm"/>
    <property type="evidence" value="ECO:0007669"/>
    <property type="project" value="UniProtKB-KW"/>
</dbReference>
<dbReference type="GO" id="GO:0031261">
    <property type="term" value="C:DNA replication preinitiation complex"/>
    <property type="evidence" value="ECO:0007669"/>
    <property type="project" value="EnsemblFungi"/>
</dbReference>
<dbReference type="GO" id="GO:0000922">
    <property type="term" value="C:spindle pole"/>
    <property type="evidence" value="ECO:0007669"/>
    <property type="project" value="UniProtKB-SubCell"/>
</dbReference>
<dbReference type="GO" id="GO:0006260">
    <property type="term" value="P:DNA replication"/>
    <property type="evidence" value="ECO:0007669"/>
    <property type="project" value="UniProtKB-KW"/>
</dbReference>
<dbReference type="GO" id="GO:0030174">
    <property type="term" value="P:regulation of DNA-templated DNA replication initiation"/>
    <property type="evidence" value="ECO:0007669"/>
    <property type="project" value="EnsemblFungi"/>
</dbReference>
<dbReference type="InterPro" id="IPR016808">
    <property type="entry name" value="Sld7"/>
</dbReference>
<dbReference type="InterPro" id="IPR041260">
    <property type="entry name" value="Sld7_C"/>
</dbReference>
<dbReference type="InterPro" id="IPR041564">
    <property type="entry name" value="Sld7_N"/>
</dbReference>
<dbReference type="Pfam" id="PF18596">
    <property type="entry name" value="Sld7_C"/>
    <property type="match status" value="1"/>
</dbReference>
<dbReference type="Pfam" id="PF18636">
    <property type="entry name" value="Sld7_N"/>
    <property type="match status" value="1"/>
</dbReference>
<dbReference type="PIRSF" id="PIRSF022788">
    <property type="entry name" value="UCP022788"/>
    <property type="match status" value="1"/>
</dbReference>
<feature type="chain" id="PRO_0000411025" description="Mitochondrial morphogenesis protein SLD7">
    <location>
        <begin position="1"/>
        <end position="279"/>
    </location>
</feature>
<reference key="1">
    <citation type="journal article" date="2004" name="Nature">
        <title>Genome evolution in yeasts.</title>
        <authorList>
            <person name="Dujon B."/>
            <person name="Sherman D."/>
            <person name="Fischer G."/>
            <person name="Durrens P."/>
            <person name="Casaregola S."/>
            <person name="Lafontaine I."/>
            <person name="de Montigny J."/>
            <person name="Marck C."/>
            <person name="Neuveglise C."/>
            <person name="Talla E."/>
            <person name="Goffard N."/>
            <person name="Frangeul L."/>
            <person name="Aigle M."/>
            <person name="Anthouard V."/>
            <person name="Babour A."/>
            <person name="Barbe V."/>
            <person name="Barnay S."/>
            <person name="Blanchin S."/>
            <person name="Beckerich J.-M."/>
            <person name="Beyne E."/>
            <person name="Bleykasten C."/>
            <person name="Boisrame A."/>
            <person name="Boyer J."/>
            <person name="Cattolico L."/>
            <person name="Confanioleri F."/>
            <person name="de Daruvar A."/>
            <person name="Despons L."/>
            <person name="Fabre E."/>
            <person name="Fairhead C."/>
            <person name="Ferry-Dumazet H."/>
            <person name="Groppi A."/>
            <person name="Hantraye F."/>
            <person name="Hennequin C."/>
            <person name="Jauniaux N."/>
            <person name="Joyet P."/>
            <person name="Kachouri R."/>
            <person name="Kerrest A."/>
            <person name="Koszul R."/>
            <person name="Lemaire M."/>
            <person name="Lesur I."/>
            <person name="Ma L."/>
            <person name="Muller H."/>
            <person name="Nicaud J.-M."/>
            <person name="Nikolski M."/>
            <person name="Oztas S."/>
            <person name="Ozier-Kalogeropoulos O."/>
            <person name="Pellenz S."/>
            <person name="Potier S."/>
            <person name="Richard G.-F."/>
            <person name="Straub M.-L."/>
            <person name="Suleau A."/>
            <person name="Swennen D."/>
            <person name="Tekaia F."/>
            <person name="Wesolowski-Louvel M."/>
            <person name="Westhof E."/>
            <person name="Wirth B."/>
            <person name="Zeniou-Meyer M."/>
            <person name="Zivanovic Y."/>
            <person name="Bolotin-Fukuhara M."/>
            <person name="Thierry A."/>
            <person name="Bouchier C."/>
            <person name="Caudron B."/>
            <person name="Scarpelli C."/>
            <person name="Gaillardin C."/>
            <person name="Weissenbach J."/>
            <person name="Wincker P."/>
            <person name="Souciet J.-L."/>
        </authorList>
    </citation>
    <scope>NUCLEOTIDE SEQUENCE [LARGE SCALE GENOMIC DNA]</scope>
    <source>
        <strain>ATCC 2001 / BCRC 20586 / JCM 3761 / NBRC 0622 / NRRL Y-65 / CBS 138</strain>
    </source>
</reference>
<keyword id="KW-0131">Cell cycle</keyword>
<keyword id="KW-0963">Cytoplasm</keyword>
<keyword id="KW-0206">Cytoskeleton</keyword>
<keyword id="KW-0235">DNA replication</keyword>
<keyword id="KW-0539">Nucleus</keyword>
<keyword id="KW-1185">Reference proteome</keyword>
<gene>
    <name type="primary">SLD7</name>
    <name type="ordered locus">CAGL0L10340g</name>
</gene>